<name>P39_PCV87</name>
<comment type="function">
    <text>Might be involved in virion assembly and vector-mediated transmission of the virus.</text>
</comment>
<comment type="miscellaneous">
    <text evidence="2">Expressed through leaky scanning mechanism. About one third ribosomes fail to initiate translation of the CP and therefore translate the P39 protein.</text>
</comment>
<accession>Q08316</accession>
<dbReference type="EMBL" id="L07269">
    <property type="protein sequence ID" value="AAA17437.1"/>
    <property type="molecule type" value="Unassigned_DNA"/>
</dbReference>
<dbReference type="RefSeq" id="NP_620029.1">
    <property type="nucleotide sequence ID" value="NC_003668.1"/>
</dbReference>
<dbReference type="SMR" id="Q08316"/>
<dbReference type="GeneID" id="991039"/>
<dbReference type="KEGG" id="vg:991039"/>
<dbReference type="Proteomes" id="UP000001668">
    <property type="component" value="Genome"/>
</dbReference>
<reference key="1">
    <citation type="journal article" date="1993" name="Virology">
        <title>Nucleotide sequence and genetic organization of peanut clump virus RNA 2 and partial characterization of deleted forms.</title>
        <authorList>
            <person name="Manohar S.K."/>
            <person name="Guilley H."/>
            <person name="Dollet M."/>
            <person name="Richards K."/>
            <person name="Jonard G."/>
        </authorList>
    </citation>
    <scope>NUCLEOTIDE SEQUENCE [GENOMIC RNA]</scope>
</reference>
<reference key="2">
    <citation type="journal article" date="1995" name="Virology">
        <title>Translation of the second gene of peanut clump virus RNA 2 occurs by leaky scanning in vitro.</title>
        <authorList>
            <person name="Herzog E."/>
            <person name="Guilley H."/>
            <person name="Fritsch C."/>
        </authorList>
    </citation>
    <scope>IDENTIFICATION</scope>
</reference>
<sequence length="367" mass="42215">MSDILKVDAPELFLAVTQESKFPGHITVHRLKTFSKSCVLRADFEPNPFGMVFVQGAVVGSVPLSNHRKLSVEGCPNVIESSDLLKLFEKLRMHREIVNMHGQVMIGLKQALVDASGVVKAEYIRCSDVFLWSDFGGCLPLRLWSRYVFCTERFVDDPQLILDGREGEEINILRKEALELQKQVTEQKAVVAELRLQISKQQGASAGTTSSVETSLRQTVEYWKGETQKFKNAWEMIEKERLKLSAEKNRAEYEVNSLTSARNSLQFHLDQLKQQHADTVAQAKRDRESAEKTIDDLNDKLYHYSDRLPVFRNRVRDIRNKLTDQLYLYNRVDLQARNRGQALNREVRALIDAIERDYPYIVWGVMP</sequence>
<proteinExistence type="predicted"/>
<protein>
    <recommendedName>
        <fullName>Protein P39</fullName>
    </recommendedName>
</protein>
<keyword id="KW-0175">Coiled coil</keyword>
<keyword id="KW-1185">Reference proteome</keyword>
<evidence type="ECO:0000255" key="1"/>
<evidence type="ECO:0000269" key="2">
    <source>
    </source>
</evidence>
<feature type="chain" id="PRO_0000409153" description="Protein P39">
    <location>
        <begin position="1"/>
        <end position="367"/>
    </location>
</feature>
<feature type="coiled-coil region" evidence="1">
    <location>
        <begin position="165"/>
        <end position="202"/>
    </location>
</feature>
<feature type="coiled-coil region" evidence="1">
    <location>
        <begin position="235"/>
        <end position="308"/>
    </location>
</feature>
<organism>
    <name type="scientific">Peanut clump virus (isolate 87/TGTA2)</name>
    <name type="common">PCV</name>
    <dbReference type="NCBI Taxonomy" id="652837"/>
    <lineage>
        <taxon>Viruses</taxon>
        <taxon>Riboviria</taxon>
        <taxon>Orthornavirae</taxon>
        <taxon>Kitrinoviricota</taxon>
        <taxon>Alsuviricetes</taxon>
        <taxon>Martellivirales</taxon>
        <taxon>Virgaviridae</taxon>
        <taxon>Pecluvirus</taxon>
        <taxon>Peanut clump virus</taxon>
    </lineage>
</organism>
<organismHost>
    <name type="scientific">Arachis hypogaea</name>
    <name type="common">Peanut</name>
    <dbReference type="NCBI Taxonomy" id="3818"/>
</organismHost>
<organismHost>
    <name type="scientific">Setaria italica</name>
    <name type="common">Foxtail millet</name>
    <name type="synonym">Panicum italicum</name>
    <dbReference type="NCBI Taxonomy" id="4555"/>
</organismHost>
<organismHost>
    <name type="scientific">Sorghum arundinaceum</name>
    <dbReference type="NCBI Taxonomy" id="91525"/>
</organismHost>
<organismHost>
    <name type="scientific">Sorghum bicolor</name>
    <name type="common">Sorghum</name>
    <name type="synonym">Sorghum vulgare</name>
    <dbReference type="NCBI Taxonomy" id="4558"/>
</organismHost>